<comment type="function">
    <text evidence="1">Multifunctional RNA-binding protein that recognizes the K-turn motif in ribosomal RNA, the RNA component of RNase P, box H/ACA, box C/D and box C'/D' sRNAs.</text>
</comment>
<comment type="subunit">
    <text evidence="1">Part of the 50S ribosomal subunit. Probably part of the RNase P complex.</text>
</comment>
<comment type="subcellular location">
    <subcellularLocation>
        <location evidence="1">Cytoplasm</location>
    </subcellularLocation>
</comment>
<comment type="similarity">
    <text evidence="1">Belongs to the eukaryotic ribosomal protein eL8 family.</text>
</comment>
<accession>B8D6E8</accession>
<organism>
    <name type="scientific">Desulfurococcus amylolyticus (strain DSM 18924 / JCM 16383 / VKM B-2413 / 1221n)</name>
    <name type="common">Desulfurococcus kamchatkensis</name>
    <dbReference type="NCBI Taxonomy" id="490899"/>
    <lineage>
        <taxon>Archaea</taxon>
        <taxon>Thermoproteota</taxon>
        <taxon>Thermoprotei</taxon>
        <taxon>Desulfurococcales</taxon>
        <taxon>Desulfurococcaceae</taxon>
        <taxon>Desulfurococcus</taxon>
    </lineage>
</organism>
<reference key="1">
    <citation type="journal article" date="2009" name="J. Bacteriol.">
        <title>Complete genome sequence of the anaerobic, protein-degrading hyperthermophilic crenarchaeon Desulfurococcus kamchatkensis.</title>
        <authorList>
            <person name="Ravin N.V."/>
            <person name="Mardanov A.V."/>
            <person name="Beletsky A.V."/>
            <person name="Kublanov I.V."/>
            <person name="Kolganova T.V."/>
            <person name="Lebedinsky A.V."/>
            <person name="Chernyh N.A."/>
            <person name="Bonch-Osmolovskaya E.A."/>
            <person name="Skryabin K.G."/>
        </authorList>
    </citation>
    <scope>NUCLEOTIDE SEQUENCE [LARGE SCALE GENOMIC DNA]</scope>
    <source>
        <strain>DSM 18924 / JCM 16383 / VKM B-2413 / 1221n</strain>
    </source>
</reference>
<gene>
    <name evidence="1" type="primary">rpl7ae</name>
    <name type="ordered locus">DKAM_1353</name>
</gene>
<dbReference type="EMBL" id="CP001140">
    <property type="protein sequence ID" value="ACL11679.1"/>
    <property type="molecule type" value="Genomic_DNA"/>
</dbReference>
<dbReference type="RefSeq" id="WP_012609020.1">
    <property type="nucleotide sequence ID" value="NC_011766.1"/>
</dbReference>
<dbReference type="SMR" id="B8D6E8"/>
<dbReference type="STRING" id="490899.DKAM_1353"/>
<dbReference type="GeneID" id="7171399"/>
<dbReference type="KEGG" id="dka:DKAM_1353"/>
<dbReference type="eggNOG" id="arCOG01751">
    <property type="taxonomic scope" value="Archaea"/>
</dbReference>
<dbReference type="HOGENOM" id="CLU_084513_4_0_2"/>
<dbReference type="Proteomes" id="UP000006903">
    <property type="component" value="Chromosome"/>
</dbReference>
<dbReference type="GO" id="GO:0005737">
    <property type="term" value="C:cytoplasm"/>
    <property type="evidence" value="ECO:0007669"/>
    <property type="project" value="UniProtKB-SubCell"/>
</dbReference>
<dbReference type="GO" id="GO:1990904">
    <property type="term" value="C:ribonucleoprotein complex"/>
    <property type="evidence" value="ECO:0007669"/>
    <property type="project" value="UniProtKB-KW"/>
</dbReference>
<dbReference type="GO" id="GO:0005840">
    <property type="term" value="C:ribosome"/>
    <property type="evidence" value="ECO:0007669"/>
    <property type="project" value="UniProtKB-KW"/>
</dbReference>
<dbReference type="GO" id="GO:0004526">
    <property type="term" value="F:ribonuclease P activity"/>
    <property type="evidence" value="ECO:0007669"/>
    <property type="project" value="UniProtKB-UniRule"/>
</dbReference>
<dbReference type="GO" id="GO:0019843">
    <property type="term" value="F:rRNA binding"/>
    <property type="evidence" value="ECO:0007669"/>
    <property type="project" value="UniProtKB-KW"/>
</dbReference>
<dbReference type="GO" id="GO:0003735">
    <property type="term" value="F:structural constituent of ribosome"/>
    <property type="evidence" value="ECO:0007669"/>
    <property type="project" value="InterPro"/>
</dbReference>
<dbReference type="GO" id="GO:0042254">
    <property type="term" value="P:ribosome biogenesis"/>
    <property type="evidence" value="ECO:0007669"/>
    <property type="project" value="InterPro"/>
</dbReference>
<dbReference type="GO" id="GO:0006412">
    <property type="term" value="P:translation"/>
    <property type="evidence" value="ECO:0007669"/>
    <property type="project" value="UniProtKB-UniRule"/>
</dbReference>
<dbReference type="GO" id="GO:0001682">
    <property type="term" value="P:tRNA 5'-leader removal"/>
    <property type="evidence" value="ECO:0007669"/>
    <property type="project" value="UniProtKB-UniRule"/>
</dbReference>
<dbReference type="FunFam" id="3.30.1330.30:FF:000020">
    <property type="entry name" value="50S ribosomal protein L7Ae"/>
    <property type="match status" value="1"/>
</dbReference>
<dbReference type="Gene3D" id="3.30.1330.30">
    <property type="match status" value="1"/>
</dbReference>
<dbReference type="HAMAP" id="MF_00326">
    <property type="entry name" value="Ribosomal_eL8"/>
    <property type="match status" value="1"/>
</dbReference>
<dbReference type="InterPro" id="IPR050257">
    <property type="entry name" value="eL8/uL1-like"/>
</dbReference>
<dbReference type="InterPro" id="IPR029064">
    <property type="entry name" value="Ribosomal_eL30-like_sf"/>
</dbReference>
<dbReference type="InterPro" id="IPR004037">
    <property type="entry name" value="Ribosomal_eL8-like_CS"/>
</dbReference>
<dbReference type="InterPro" id="IPR004038">
    <property type="entry name" value="Ribosomal_eL8/eL30/eS12/Gad45"/>
</dbReference>
<dbReference type="InterPro" id="IPR018492">
    <property type="entry name" value="Ribosomal_eL8/Nhp2"/>
</dbReference>
<dbReference type="InterPro" id="IPR022481">
    <property type="entry name" value="Ribosomal_eL8_arc"/>
</dbReference>
<dbReference type="NCBIfam" id="TIGR03677">
    <property type="entry name" value="eL8_ribo"/>
    <property type="match status" value="1"/>
</dbReference>
<dbReference type="PANTHER" id="PTHR23105">
    <property type="entry name" value="RIBOSOMAL PROTEIN L7AE FAMILY MEMBER"/>
    <property type="match status" value="1"/>
</dbReference>
<dbReference type="Pfam" id="PF01248">
    <property type="entry name" value="Ribosomal_L7Ae"/>
    <property type="match status" value="1"/>
</dbReference>
<dbReference type="PRINTS" id="PR00881">
    <property type="entry name" value="L7ARS6FAMILY"/>
</dbReference>
<dbReference type="PRINTS" id="PR00884">
    <property type="entry name" value="RIBOSOMALHS6"/>
</dbReference>
<dbReference type="SUPFAM" id="SSF55315">
    <property type="entry name" value="L30e-like"/>
    <property type="match status" value="1"/>
</dbReference>
<dbReference type="PROSITE" id="PS01082">
    <property type="entry name" value="RIBOSOMAL_L7AE"/>
    <property type="match status" value="1"/>
</dbReference>
<proteinExistence type="inferred from homology"/>
<sequence length="127" mass="13697">MPKPFYVKFEVPPELADKVYQAISKVRETGGKIKKGTNETTKAVERGQAKLVVIAEDVDPPEIVAHLPLLCDEKKIPYVYVPSKQKLGQAAGIEVSAASVAVIDVGGAKDLIDEIIKSVQQIRAQSG</sequence>
<feature type="chain" id="PRO_1000194095" description="Large ribosomal subunit protein eL8">
    <location>
        <begin position="1"/>
        <end position="127"/>
    </location>
</feature>
<keyword id="KW-0963">Cytoplasm</keyword>
<keyword id="KW-0687">Ribonucleoprotein</keyword>
<keyword id="KW-0689">Ribosomal protein</keyword>
<keyword id="KW-0694">RNA-binding</keyword>
<keyword id="KW-0699">rRNA-binding</keyword>
<keyword id="KW-0819">tRNA processing</keyword>
<protein>
    <recommendedName>
        <fullName evidence="1">Large ribosomal subunit protein eL8</fullName>
    </recommendedName>
    <alternativeName>
        <fullName evidence="2">50S ribosomal protein L7Ae</fullName>
    </alternativeName>
    <alternativeName>
        <fullName evidence="1">Ribosomal protein L8e</fullName>
    </alternativeName>
</protein>
<evidence type="ECO:0000255" key="1">
    <source>
        <dbReference type="HAMAP-Rule" id="MF_00326"/>
    </source>
</evidence>
<evidence type="ECO:0000305" key="2"/>
<name>RL7A_DESA1</name>